<proteinExistence type="inferred from homology"/>
<feature type="chain" id="PRO_1000200513" description="Uridine kinase">
    <location>
        <begin position="1"/>
        <end position="211"/>
    </location>
</feature>
<feature type="binding site" evidence="1">
    <location>
        <begin position="15"/>
        <end position="22"/>
    </location>
    <ligand>
        <name>ATP</name>
        <dbReference type="ChEBI" id="CHEBI:30616"/>
    </ligand>
</feature>
<keyword id="KW-0067">ATP-binding</keyword>
<keyword id="KW-0963">Cytoplasm</keyword>
<keyword id="KW-0418">Kinase</keyword>
<keyword id="KW-0547">Nucleotide-binding</keyword>
<keyword id="KW-1185">Reference proteome</keyword>
<keyword id="KW-0808">Transferase</keyword>
<reference key="1">
    <citation type="journal article" date="2005" name="Nat. Biotechnol.">
        <title>The complete genome sequence of the meat-borne lactic acid bacterium Lactobacillus sakei 23K.</title>
        <authorList>
            <person name="Chaillou S."/>
            <person name="Champomier-Verges M.-C."/>
            <person name="Cornet M."/>
            <person name="Crutz-Le Coq A.-M."/>
            <person name="Dudez A.-M."/>
            <person name="Martin V."/>
            <person name="Beaufils S."/>
            <person name="Darbon-Rongere E."/>
            <person name="Bossy R."/>
            <person name="Loux V."/>
            <person name="Zagorec M."/>
        </authorList>
    </citation>
    <scope>NUCLEOTIDE SEQUENCE [LARGE SCALE GENOMIC DNA]</scope>
    <source>
        <strain>23K</strain>
    </source>
</reference>
<organism>
    <name type="scientific">Latilactobacillus sakei subsp. sakei (strain 23K)</name>
    <name type="common">Lactobacillus sakei subsp. sakei</name>
    <dbReference type="NCBI Taxonomy" id="314315"/>
    <lineage>
        <taxon>Bacteria</taxon>
        <taxon>Bacillati</taxon>
        <taxon>Bacillota</taxon>
        <taxon>Bacilli</taxon>
        <taxon>Lactobacillales</taxon>
        <taxon>Lactobacillaceae</taxon>
        <taxon>Latilactobacillus</taxon>
    </lineage>
</organism>
<sequence>MTSQKKAPIIIGVTGGSGSGKTTVSQAIAQKFANHSVMLLPQDAYYKHQDGSFEERQETNYDHPDAFDTDLLIEQATMLKNHQPIEQPVYDYKIHNRTDEVVHVEPQDVIILEGILVLADARLRDLMDIKVYVDTDDDIRLLRRMSRDMESRGRSFDDIVMQYLKTVKPMFHEFIEPTKRYADLIVPEGGNNRVAIDLLVTKIQSILNMND</sequence>
<accession>Q38VV6</accession>
<evidence type="ECO:0000255" key="1">
    <source>
        <dbReference type="HAMAP-Rule" id="MF_00551"/>
    </source>
</evidence>
<comment type="catalytic activity">
    <reaction evidence="1">
        <text>uridine + ATP = UMP + ADP + H(+)</text>
        <dbReference type="Rhea" id="RHEA:16825"/>
        <dbReference type="ChEBI" id="CHEBI:15378"/>
        <dbReference type="ChEBI" id="CHEBI:16704"/>
        <dbReference type="ChEBI" id="CHEBI:30616"/>
        <dbReference type="ChEBI" id="CHEBI:57865"/>
        <dbReference type="ChEBI" id="CHEBI:456216"/>
        <dbReference type="EC" id="2.7.1.48"/>
    </reaction>
</comment>
<comment type="catalytic activity">
    <reaction evidence="1">
        <text>cytidine + ATP = CMP + ADP + H(+)</text>
        <dbReference type="Rhea" id="RHEA:24674"/>
        <dbReference type="ChEBI" id="CHEBI:15378"/>
        <dbReference type="ChEBI" id="CHEBI:17562"/>
        <dbReference type="ChEBI" id="CHEBI:30616"/>
        <dbReference type="ChEBI" id="CHEBI:60377"/>
        <dbReference type="ChEBI" id="CHEBI:456216"/>
        <dbReference type="EC" id="2.7.1.48"/>
    </reaction>
</comment>
<comment type="pathway">
    <text evidence="1">Pyrimidine metabolism; CTP biosynthesis via salvage pathway; CTP from cytidine: step 1/3.</text>
</comment>
<comment type="pathway">
    <text evidence="1">Pyrimidine metabolism; UMP biosynthesis via salvage pathway; UMP from uridine: step 1/1.</text>
</comment>
<comment type="subcellular location">
    <subcellularLocation>
        <location evidence="1">Cytoplasm</location>
    </subcellularLocation>
</comment>
<comment type="similarity">
    <text evidence="1">Belongs to the uridine kinase family.</text>
</comment>
<dbReference type="EC" id="2.7.1.48" evidence="1"/>
<dbReference type="EMBL" id="CR936503">
    <property type="protein sequence ID" value="CAI55677.1"/>
    <property type="molecule type" value="Genomic_DNA"/>
</dbReference>
<dbReference type="SMR" id="Q38VV6"/>
<dbReference type="STRING" id="314315.LCA_1373"/>
<dbReference type="KEGG" id="lsa:LCA_1373"/>
<dbReference type="eggNOG" id="COG0572">
    <property type="taxonomic scope" value="Bacteria"/>
</dbReference>
<dbReference type="HOGENOM" id="CLU_021278_1_2_9"/>
<dbReference type="OrthoDB" id="9777642at2"/>
<dbReference type="UniPathway" id="UPA00574">
    <property type="reaction ID" value="UER00637"/>
</dbReference>
<dbReference type="UniPathway" id="UPA00579">
    <property type="reaction ID" value="UER00640"/>
</dbReference>
<dbReference type="Proteomes" id="UP000002707">
    <property type="component" value="Chromosome"/>
</dbReference>
<dbReference type="GO" id="GO:0005737">
    <property type="term" value="C:cytoplasm"/>
    <property type="evidence" value="ECO:0007669"/>
    <property type="project" value="UniProtKB-SubCell"/>
</dbReference>
<dbReference type="GO" id="GO:0005524">
    <property type="term" value="F:ATP binding"/>
    <property type="evidence" value="ECO:0007669"/>
    <property type="project" value="UniProtKB-UniRule"/>
</dbReference>
<dbReference type="GO" id="GO:0043771">
    <property type="term" value="F:cytidine kinase activity"/>
    <property type="evidence" value="ECO:0007669"/>
    <property type="project" value="RHEA"/>
</dbReference>
<dbReference type="GO" id="GO:0004849">
    <property type="term" value="F:uridine kinase activity"/>
    <property type="evidence" value="ECO:0007669"/>
    <property type="project" value="UniProtKB-UniRule"/>
</dbReference>
<dbReference type="GO" id="GO:0044211">
    <property type="term" value="P:CTP salvage"/>
    <property type="evidence" value="ECO:0007669"/>
    <property type="project" value="UniProtKB-UniRule"/>
</dbReference>
<dbReference type="GO" id="GO:0044206">
    <property type="term" value="P:UMP salvage"/>
    <property type="evidence" value="ECO:0007669"/>
    <property type="project" value="UniProtKB-UniRule"/>
</dbReference>
<dbReference type="CDD" id="cd02023">
    <property type="entry name" value="UMPK"/>
    <property type="match status" value="1"/>
</dbReference>
<dbReference type="FunFam" id="3.40.50.300:FF:000339">
    <property type="entry name" value="Uridine kinase"/>
    <property type="match status" value="1"/>
</dbReference>
<dbReference type="Gene3D" id="3.40.50.300">
    <property type="entry name" value="P-loop containing nucleotide triphosphate hydrolases"/>
    <property type="match status" value="1"/>
</dbReference>
<dbReference type="HAMAP" id="MF_00551">
    <property type="entry name" value="Uridine_kinase"/>
    <property type="match status" value="1"/>
</dbReference>
<dbReference type="InterPro" id="IPR027417">
    <property type="entry name" value="P-loop_NTPase"/>
</dbReference>
<dbReference type="InterPro" id="IPR006083">
    <property type="entry name" value="PRK/URK"/>
</dbReference>
<dbReference type="InterPro" id="IPR026008">
    <property type="entry name" value="Uridine_kinase"/>
</dbReference>
<dbReference type="InterPro" id="IPR000764">
    <property type="entry name" value="Uridine_kinase-like"/>
</dbReference>
<dbReference type="NCBIfam" id="NF004018">
    <property type="entry name" value="PRK05480.1"/>
    <property type="match status" value="1"/>
</dbReference>
<dbReference type="NCBIfam" id="TIGR00235">
    <property type="entry name" value="udk"/>
    <property type="match status" value="1"/>
</dbReference>
<dbReference type="PANTHER" id="PTHR10285">
    <property type="entry name" value="URIDINE KINASE"/>
    <property type="match status" value="1"/>
</dbReference>
<dbReference type="Pfam" id="PF00485">
    <property type="entry name" value="PRK"/>
    <property type="match status" value="1"/>
</dbReference>
<dbReference type="PRINTS" id="PR00988">
    <property type="entry name" value="URIDINKINASE"/>
</dbReference>
<dbReference type="SUPFAM" id="SSF52540">
    <property type="entry name" value="P-loop containing nucleoside triphosphate hydrolases"/>
    <property type="match status" value="1"/>
</dbReference>
<name>URK_LATSS</name>
<protein>
    <recommendedName>
        <fullName evidence="1">Uridine kinase</fullName>
        <ecNumber evidence="1">2.7.1.48</ecNumber>
    </recommendedName>
    <alternativeName>
        <fullName evidence="1">Cytidine monophosphokinase</fullName>
    </alternativeName>
    <alternativeName>
        <fullName evidence="1">Uridine monophosphokinase</fullName>
    </alternativeName>
</protein>
<gene>
    <name evidence="1" type="primary">udk</name>
    <name type="ordered locus">LCA_1373</name>
</gene>